<comment type="similarity">
    <text evidence="1">Belongs to the eukaryotic ribosomal protein eL34 family.</text>
</comment>
<feature type="chain" id="PRO_1000006930" description="Large ribosomal subunit protein eL34">
    <location>
        <begin position="1"/>
        <end position="84"/>
    </location>
</feature>
<dbReference type="EMBL" id="CP000561">
    <property type="protein sequence ID" value="ABO08535.1"/>
    <property type="molecule type" value="Genomic_DNA"/>
</dbReference>
<dbReference type="RefSeq" id="WP_011849793.1">
    <property type="nucleotide sequence ID" value="NC_009073.1"/>
</dbReference>
<dbReference type="PDB" id="9E6Q">
    <property type="method" value="EM"/>
    <property type="resolution" value="1.95 A"/>
    <property type="chains" value="Ac=1-84"/>
</dbReference>
<dbReference type="PDB" id="9E71">
    <property type="method" value="EM"/>
    <property type="resolution" value="2.36 A"/>
    <property type="chains" value="Ac=1-84"/>
</dbReference>
<dbReference type="PDB" id="9E7F">
    <property type="method" value="EM"/>
    <property type="resolution" value="2.53 A"/>
    <property type="chains" value="Ac=1-84"/>
</dbReference>
<dbReference type="PDBsum" id="9E6Q"/>
<dbReference type="PDBsum" id="9E71"/>
<dbReference type="PDBsum" id="9E7F"/>
<dbReference type="EMDB" id="EMD-47578"/>
<dbReference type="EMDB" id="EMD-47628"/>
<dbReference type="EMDB" id="EMD-47668"/>
<dbReference type="SMR" id="A3MV68"/>
<dbReference type="STRING" id="410359.Pcal_1110"/>
<dbReference type="GeneID" id="4910078"/>
<dbReference type="KEGG" id="pcl:Pcal_1110"/>
<dbReference type="eggNOG" id="arCOG04168">
    <property type="taxonomic scope" value="Archaea"/>
</dbReference>
<dbReference type="HOGENOM" id="CLU_118652_2_0_2"/>
<dbReference type="OrthoDB" id="43096at2157"/>
<dbReference type="Proteomes" id="UP000001431">
    <property type="component" value="Chromosome"/>
</dbReference>
<dbReference type="GO" id="GO:1990904">
    <property type="term" value="C:ribonucleoprotein complex"/>
    <property type="evidence" value="ECO:0007669"/>
    <property type="project" value="UniProtKB-KW"/>
</dbReference>
<dbReference type="GO" id="GO:0005840">
    <property type="term" value="C:ribosome"/>
    <property type="evidence" value="ECO:0007669"/>
    <property type="project" value="UniProtKB-KW"/>
</dbReference>
<dbReference type="GO" id="GO:0003735">
    <property type="term" value="F:structural constituent of ribosome"/>
    <property type="evidence" value="ECO:0007669"/>
    <property type="project" value="InterPro"/>
</dbReference>
<dbReference type="GO" id="GO:0006412">
    <property type="term" value="P:translation"/>
    <property type="evidence" value="ECO:0007669"/>
    <property type="project" value="UniProtKB-UniRule"/>
</dbReference>
<dbReference type="Gene3D" id="6.20.340.10">
    <property type="match status" value="1"/>
</dbReference>
<dbReference type="Gene3D" id="6.20.370.70">
    <property type="match status" value="1"/>
</dbReference>
<dbReference type="HAMAP" id="MF_00349">
    <property type="entry name" value="Ribosomal_eL34"/>
    <property type="match status" value="1"/>
</dbReference>
<dbReference type="InterPro" id="IPR008195">
    <property type="entry name" value="Ribosomal_eL34"/>
</dbReference>
<dbReference type="InterPro" id="IPR038562">
    <property type="entry name" value="Ribosomal_eL34_C_sf"/>
</dbReference>
<dbReference type="InterPro" id="IPR018065">
    <property type="entry name" value="Ribosomal_eL34_CS"/>
</dbReference>
<dbReference type="InterPro" id="IPR047868">
    <property type="entry name" value="Ribosomal_L34e_arc-type"/>
</dbReference>
<dbReference type="NCBIfam" id="NF003143">
    <property type="entry name" value="PRK04059.1"/>
    <property type="match status" value="1"/>
</dbReference>
<dbReference type="Pfam" id="PF01199">
    <property type="entry name" value="Ribosomal_L34e"/>
    <property type="match status" value="1"/>
</dbReference>
<dbReference type="PRINTS" id="PR01250">
    <property type="entry name" value="RIBOSOMALL34"/>
</dbReference>
<dbReference type="PROSITE" id="PS01145">
    <property type="entry name" value="RIBOSOMAL_L34E"/>
    <property type="match status" value="1"/>
</dbReference>
<proteinExistence type="evidence at protein level"/>
<protein>
    <recommendedName>
        <fullName evidence="1">Large ribosomal subunit protein eL34</fullName>
    </recommendedName>
    <alternativeName>
        <fullName evidence="2">50S ribosomal protein L34e</fullName>
    </alternativeName>
</protein>
<sequence length="84" mass="9350">MPRPAYRSRSLRRVKVKTPGGRTVVHYEKRAKGVPKCAVTGQPLGGMNSKVYRFGISTRAPSRPYGGVVSHKVLARAIRYAVRR</sequence>
<gene>
    <name evidence="1" type="primary">rpl34e</name>
    <name type="ordered locus">Pcal_1110</name>
</gene>
<name>RL34_PYRCJ</name>
<organism>
    <name type="scientific">Pyrobaculum calidifontis (strain DSM 21063 / JCM 11548 / VA1)</name>
    <dbReference type="NCBI Taxonomy" id="410359"/>
    <lineage>
        <taxon>Archaea</taxon>
        <taxon>Thermoproteota</taxon>
        <taxon>Thermoprotei</taxon>
        <taxon>Thermoproteales</taxon>
        <taxon>Thermoproteaceae</taxon>
        <taxon>Pyrobaculum</taxon>
    </lineage>
</organism>
<keyword id="KW-0002">3D-structure</keyword>
<keyword id="KW-0687">Ribonucleoprotein</keyword>
<keyword id="KW-0689">Ribosomal protein</keyword>
<evidence type="ECO:0000255" key="1">
    <source>
        <dbReference type="HAMAP-Rule" id="MF_00349"/>
    </source>
</evidence>
<evidence type="ECO:0000305" key="2"/>
<reference key="1">
    <citation type="submission" date="2007-02" db="EMBL/GenBank/DDBJ databases">
        <title>Complete sequence of Pyrobaculum calidifontis JCM 11548.</title>
        <authorList>
            <consortium name="US DOE Joint Genome Institute"/>
            <person name="Copeland A."/>
            <person name="Lucas S."/>
            <person name="Lapidus A."/>
            <person name="Barry K."/>
            <person name="Glavina del Rio T."/>
            <person name="Dalin E."/>
            <person name="Tice H."/>
            <person name="Pitluck S."/>
            <person name="Chain P."/>
            <person name="Malfatti S."/>
            <person name="Shin M."/>
            <person name="Vergez L."/>
            <person name="Schmutz J."/>
            <person name="Larimer F."/>
            <person name="Land M."/>
            <person name="Hauser L."/>
            <person name="Kyrpides N."/>
            <person name="Mikhailova N."/>
            <person name="Cozen A.E."/>
            <person name="Fitz-Gibbon S.T."/>
            <person name="House C.H."/>
            <person name="Saltikov C."/>
            <person name="Lowe T.M."/>
            <person name="Richardson P."/>
        </authorList>
    </citation>
    <scope>NUCLEOTIDE SEQUENCE [LARGE SCALE GENOMIC DNA]</scope>
    <source>
        <strain>DSM 21063 / JCM 11548 / VA1</strain>
    </source>
</reference>
<accession>A3MV68</accession>